<protein>
    <recommendedName>
        <fullName evidence="2">ATP-dependent DNA helicase chl1</fullName>
        <ecNumber evidence="3">5.6.2.3</ecNumber>
    </recommendedName>
    <alternativeName>
        <fullName evidence="2">Chromosome loss protein 1</fullName>
    </alternativeName>
    <alternativeName>
        <fullName evidence="6">DNA 5'-3' helicase chl1</fullName>
    </alternativeName>
</protein>
<organism>
    <name type="scientific">Aspergillus clavatus (strain ATCC 1007 / CBS 513.65 / DSM 816 / NCTC 3887 / NRRL 1 / QM 1276 / 107)</name>
    <dbReference type="NCBI Taxonomy" id="344612"/>
    <lineage>
        <taxon>Eukaryota</taxon>
        <taxon>Fungi</taxon>
        <taxon>Dikarya</taxon>
        <taxon>Ascomycota</taxon>
        <taxon>Pezizomycotina</taxon>
        <taxon>Eurotiomycetes</taxon>
        <taxon>Eurotiomycetidae</taxon>
        <taxon>Eurotiales</taxon>
        <taxon>Aspergillaceae</taxon>
        <taxon>Aspergillus</taxon>
        <taxon>Aspergillus subgen. Fumigati</taxon>
    </lineage>
</organism>
<comment type="function">
    <text evidence="2">ATP-dependent DNA helicase important for chromosome transmission and normal cell cycle progression in G(2)/M (By similarity). May have a role in changing DNA topology to allow the loading of proteins involved in maintaining sister chromatid cohesion in the vicinity of the centromeres (By similarity). Has a specific role in chromosome segregation during meiosis II (By similarity).</text>
</comment>
<comment type="catalytic activity">
    <reaction evidence="3">
        <text>Couples ATP hydrolysis with the unwinding of duplex DNA at the replication fork by translocating in the 5'-3' direction. This creates two antiparallel DNA single strands (ssDNA). The leading ssDNA polymer is the template for DNA polymerase III holoenzyme which synthesizes a continuous strand.</text>
        <dbReference type="EC" id="5.6.2.3"/>
    </reaction>
</comment>
<comment type="catalytic activity">
    <reaction evidence="3">
        <text>ATP + H2O = ADP + phosphate + H(+)</text>
        <dbReference type="Rhea" id="RHEA:13065"/>
        <dbReference type="ChEBI" id="CHEBI:15377"/>
        <dbReference type="ChEBI" id="CHEBI:15378"/>
        <dbReference type="ChEBI" id="CHEBI:30616"/>
        <dbReference type="ChEBI" id="CHEBI:43474"/>
        <dbReference type="ChEBI" id="CHEBI:456216"/>
        <dbReference type="EC" id="5.6.2.3"/>
    </reaction>
</comment>
<comment type="cofactor">
    <cofactor evidence="1">
        <name>[4Fe-4S] cluster</name>
        <dbReference type="ChEBI" id="CHEBI:49883"/>
    </cofactor>
    <text evidence="1">Binds 1 [4Fe-4S] cluster.</text>
</comment>
<comment type="subcellular location">
    <subcellularLocation>
        <location evidence="2">Nucleus</location>
    </subcellularLocation>
</comment>
<comment type="similarity">
    <text evidence="6">Belongs to the DEAD box helicase family. DEAH subfamily. DDX11/CHL1 sub-subfamily.</text>
</comment>
<feature type="chain" id="PRO_0000351002" description="ATP-dependent DNA helicase chl1">
    <location>
        <begin position="1"/>
        <end position="731"/>
    </location>
</feature>
<feature type="domain" description="Helicase ATP-binding" evidence="4">
    <location>
        <begin position="1"/>
        <end position="299"/>
    </location>
</feature>
<feature type="region of interest" description="Disordered" evidence="5">
    <location>
        <begin position="1"/>
        <end position="42"/>
    </location>
</feature>
<feature type="short sequence motif" description="DEAH box">
    <location>
        <begin position="247"/>
        <end position="250"/>
    </location>
</feature>
<feature type="compositionally biased region" description="Basic and acidic residues" evidence="5">
    <location>
        <begin position="9"/>
        <end position="22"/>
    </location>
</feature>
<feature type="binding site" evidence="4">
    <location>
        <begin position="35"/>
        <end position="42"/>
    </location>
    <ligand>
        <name>ATP</name>
        <dbReference type="ChEBI" id="CHEBI:30616"/>
    </ligand>
</feature>
<feature type="binding site" evidence="1">
    <location>
        <position position="133"/>
    </location>
    <ligand>
        <name>[4Fe-4S] cluster</name>
        <dbReference type="ChEBI" id="CHEBI:49883"/>
    </ligand>
</feature>
<feature type="binding site" evidence="1">
    <location>
        <position position="151"/>
    </location>
    <ligand>
        <name>[4Fe-4S] cluster</name>
        <dbReference type="ChEBI" id="CHEBI:49883"/>
    </ligand>
</feature>
<feature type="binding site" evidence="1">
    <location>
        <position position="165"/>
    </location>
    <ligand>
        <name>[4Fe-4S] cluster</name>
        <dbReference type="ChEBI" id="CHEBI:49883"/>
    </ligand>
</feature>
<feature type="binding site" evidence="1">
    <location>
        <position position="204"/>
    </location>
    <ligand>
        <name>[4Fe-4S] cluster</name>
        <dbReference type="ChEBI" id="CHEBI:49883"/>
    </ligand>
</feature>
<evidence type="ECO:0000250" key="1">
    <source>
        <dbReference type="UniProtKB" id="P18074"/>
    </source>
</evidence>
<evidence type="ECO:0000250" key="2">
    <source>
        <dbReference type="UniProtKB" id="P22516"/>
    </source>
</evidence>
<evidence type="ECO:0000250" key="3">
    <source>
        <dbReference type="UniProtKB" id="Q96FC9"/>
    </source>
</evidence>
<evidence type="ECO:0000255" key="4">
    <source>
        <dbReference type="PROSITE-ProRule" id="PRU00541"/>
    </source>
</evidence>
<evidence type="ECO:0000256" key="5">
    <source>
        <dbReference type="SAM" id="MobiDB-lite"/>
    </source>
</evidence>
<evidence type="ECO:0000305" key="6"/>
<name>CHL1_ASPCL</name>
<proteinExistence type="inferred from homology"/>
<dbReference type="EC" id="5.6.2.3" evidence="3"/>
<dbReference type="EMBL" id="DS027056">
    <property type="protein sequence ID" value="EAW09158.1"/>
    <property type="molecule type" value="Genomic_DNA"/>
</dbReference>
<dbReference type="RefSeq" id="XP_001270584.1">
    <property type="nucleotide sequence ID" value="XM_001270583.1"/>
</dbReference>
<dbReference type="SMR" id="A1CJ34"/>
<dbReference type="STRING" id="344612.A1CJ34"/>
<dbReference type="EnsemblFungi" id="EAW09158">
    <property type="protein sequence ID" value="EAW09158"/>
    <property type="gene ID" value="ACLA_033610"/>
</dbReference>
<dbReference type="GeneID" id="4703543"/>
<dbReference type="KEGG" id="act:ACLA_033610"/>
<dbReference type="VEuPathDB" id="FungiDB:ACLA_033610"/>
<dbReference type="eggNOG" id="KOG1133">
    <property type="taxonomic scope" value="Eukaryota"/>
</dbReference>
<dbReference type="HOGENOM" id="CLU_006515_2_0_1"/>
<dbReference type="OMA" id="PRQRIYS"/>
<dbReference type="OrthoDB" id="267079at2759"/>
<dbReference type="Proteomes" id="UP000006701">
    <property type="component" value="Unassembled WGS sequence"/>
</dbReference>
<dbReference type="GO" id="GO:0000785">
    <property type="term" value="C:chromatin"/>
    <property type="evidence" value="ECO:0007669"/>
    <property type="project" value="EnsemblFungi"/>
</dbReference>
<dbReference type="GO" id="GO:0005634">
    <property type="term" value="C:nucleus"/>
    <property type="evidence" value="ECO:0007669"/>
    <property type="project" value="UniProtKB-SubCell"/>
</dbReference>
<dbReference type="GO" id="GO:0005524">
    <property type="term" value="F:ATP binding"/>
    <property type="evidence" value="ECO:0007669"/>
    <property type="project" value="UniProtKB-KW"/>
</dbReference>
<dbReference type="GO" id="GO:0016887">
    <property type="term" value="F:ATP hydrolysis activity"/>
    <property type="evidence" value="ECO:0007669"/>
    <property type="project" value="RHEA"/>
</dbReference>
<dbReference type="GO" id="GO:0003677">
    <property type="term" value="F:DNA binding"/>
    <property type="evidence" value="ECO:0007669"/>
    <property type="project" value="UniProtKB-KW"/>
</dbReference>
<dbReference type="GO" id="GO:0003678">
    <property type="term" value="F:DNA helicase activity"/>
    <property type="evidence" value="ECO:0007669"/>
    <property type="project" value="EnsemblFungi"/>
</dbReference>
<dbReference type="GO" id="GO:0051536">
    <property type="term" value="F:iron-sulfur cluster binding"/>
    <property type="evidence" value="ECO:0007669"/>
    <property type="project" value="UniProtKB-KW"/>
</dbReference>
<dbReference type="GO" id="GO:0046872">
    <property type="term" value="F:metal ion binding"/>
    <property type="evidence" value="ECO:0007669"/>
    <property type="project" value="UniProtKB-KW"/>
</dbReference>
<dbReference type="GO" id="GO:0034085">
    <property type="term" value="P:establishment of sister chromatid cohesion"/>
    <property type="evidence" value="ECO:0007669"/>
    <property type="project" value="EnsemblFungi"/>
</dbReference>
<dbReference type="GO" id="GO:0036297">
    <property type="term" value="P:interstrand cross-link repair"/>
    <property type="evidence" value="ECO:0007669"/>
    <property type="project" value="EnsemblFungi"/>
</dbReference>
<dbReference type="GO" id="GO:0031571">
    <property type="term" value="P:mitotic G1 DNA damage checkpoint signaling"/>
    <property type="evidence" value="ECO:0007669"/>
    <property type="project" value="EnsemblFungi"/>
</dbReference>
<dbReference type="GO" id="GO:0007064">
    <property type="term" value="P:mitotic sister chromatid cohesion"/>
    <property type="evidence" value="ECO:0007669"/>
    <property type="project" value="EnsemblFungi"/>
</dbReference>
<dbReference type="CDD" id="cd18788">
    <property type="entry name" value="SF2_C_XPD"/>
    <property type="match status" value="1"/>
</dbReference>
<dbReference type="FunFam" id="3.40.50.300:FF:001372">
    <property type="entry name" value="ATP-dependent DNA helicase chl1"/>
    <property type="match status" value="1"/>
</dbReference>
<dbReference type="FunFam" id="3.40.50.300:FF:002774">
    <property type="entry name" value="ATP-dependent DNA helicase chl1"/>
    <property type="match status" value="1"/>
</dbReference>
<dbReference type="Gene3D" id="3.40.50.300">
    <property type="entry name" value="P-loop containing nucleotide triphosphate hydrolases"/>
    <property type="match status" value="2"/>
</dbReference>
<dbReference type="InterPro" id="IPR006555">
    <property type="entry name" value="ATP-dep_Helicase_C"/>
</dbReference>
<dbReference type="InterPro" id="IPR045028">
    <property type="entry name" value="DinG/Rad3-like"/>
</dbReference>
<dbReference type="InterPro" id="IPR002464">
    <property type="entry name" value="DNA/RNA_helicase_DEAH_CS"/>
</dbReference>
<dbReference type="InterPro" id="IPR014013">
    <property type="entry name" value="Helic_SF1/SF2_ATP-bd_DinG/Rad3"/>
</dbReference>
<dbReference type="InterPro" id="IPR006554">
    <property type="entry name" value="Helicase-like_DEXD_c2"/>
</dbReference>
<dbReference type="InterPro" id="IPR027417">
    <property type="entry name" value="P-loop_NTPase"/>
</dbReference>
<dbReference type="InterPro" id="IPR010614">
    <property type="entry name" value="RAD3-like_helicase_DEAD"/>
</dbReference>
<dbReference type="InterPro" id="IPR013020">
    <property type="entry name" value="Rad3/Chl1-like"/>
</dbReference>
<dbReference type="NCBIfam" id="TIGR00604">
    <property type="entry name" value="rad3"/>
    <property type="match status" value="1"/>
</dbReference>
<dbReference type="PANTHER" id="PTHR11472:SF41">
    <property type="entry name" value="ATP-DEPENDENT DNA HELICASE DDX11-RELATED"/>
    <property type="match status" value="1"/>
</dbReference>
<dbReference type="PANTHER" id="PTHR11472">
    <property type="entry name" value="DNA REPAIR DEAD HELICASE RAD3/XP-D SUBFAMILY MEMBER"/>
    <property type="match status" value="1"/>
</dbReference>
<dbReference type="Pfam" id="PF06733">
    <property type="entry name" value="DEAD_2"/>
    <property type="match status" value="1"/>
</dbReference>
<dbReference type="Pfam" id="PF13307">
    <property type="entry name" value="Helicase_C_2"/>
    <property type="match status" value="1"/>
</dbReference>
<dbReference type="SMART" id="SM00488">
    <property type="entry name" value="DEXDc2"/>
    <property type="match status" value="1"/>
</dbReference>
<dbReference type="SMART" id="SM00491">
    <property type="entry name" value="HELICc2"/>
    <property type="match status" value="1"/>
</dbReference>
<dbReference type="PROSITE" id="PS00690">
    <property type="entry name" value="DEAH_ATP_HELICASE"/>
    <property type="match status" value="1"/>
</dbReference>
<dbReference type="PROSITE" id="PS51193">
    <property type="entry name" value="HELICASE_ATP_BIND_2"/>
    <property type="match status" value="1"/>
</dbReference>
<gene>
    <name type="primary">chl1</name>
    <name type="ORF">ACLA_033610</name>
</gene>
<sequence>MCQKYDTLSGDRDVEHDEHFVLEDYDSESEDQNISSKSLGHSSELSMSTLALLERFKKQYSAPTEEEETVGDDEPKIFYCSRTHSQLAQFASELRRVEMPPSLPKELSEKLTDSEALEERVKHLSLGSRKNLCINPRVMKLENATAINERCMDLQQPGMAVEHRCPYLPSKDDEPQVLQFRDHTLATVKDIEDMGKLGKHIGVCPYYASRSVIKHSEIVTLPYPLLLQRSAREALGLSIKNHIVIIDEAHNLMDAISNIHSVTITLSQLQTAIFQLTTYARKFKTRLKGKNRTYIAQVIRLVSSVADHLRSIQGSNQPPDGAVKTSDLMAGKGVDQINPYKLSHYLQESKLARKVDGYVEYSKDTANRQSHGKPSTPVLFHVQSFLLPLMNPSAEGRLFYMKDQNDIQLKYLLLDPTNHFREIVEDARAVILAGGTMSPMSDYMNHLFPYVPASRLDTFSYGHVIPPENLVAHTLAQGVMGCAFDFTYESRDSEKMIIDLGRTVATLCQAIPDGVVAFFPSYDYLSRILHIWKKPLGADKNQTILGLIERKKPILYESRDMTTKSDDILQEYTRTIDSGSGALLLSVIGGKLSEGINFSDRLGRGVLIIGLPFPNIRSAVWQAKLQYVEQKAYSGSSGSETDRQMIAKAAGRDFYENACMRAVNQCIGRAIRHRNDYAAIVMIDRRYDKPNIQGKLPAWIKQSMVRSPTQRPAGATVQNLIKFFAARGSLD</sequence>
<accession>A1CJ34</accession>
<keyword id="KW-0067">ATP-binding</keyword>
<keyword id="KW-0131">Cell cycle</keyword>
<keyword id="KW-0238">DNA-binding</keyword>
<keyword id="KW-0347">Helicase</keyword>
<keyword id="KW-0378">Hydrolase</keyword>
<keyword id="KW-0408">Iron</keyword>
<keyword id="KW-0411">Iron-sulfur</keyword>
<keyword id="KW-0413">Isomerase</keyword>
<keyword id="KW-0479">Metal-binding</keyword>
<keyword id="KW-0547">Nucleotide-binding</keyword>
<keyword id="KW-0539">Nucleus</keyword>
<keyword id="KW-1185">Reference proteome</keyword>
<reference key="1">
    <citation type="journal article" date="2008" name="PLoS Genet.">
        <title>Genomic islands in the pathogenic filamentous fungus Aspergillus fumigatus.</title>
        <authorList>
            <person name="Fedorova N.D."/>
            <person name="Khaldi N."/>
            <person name="Joardar V.S."/>
            <person name="Maiti R."/>
            <person name="Amedeo P."/>
            <person name="Anderson M.J."/>
            <person name="Crabtree J."/>
            <person name="Silva J.C."/>
            <person name="Badger J.H."/>
            <person name="Albarraq A."/>
            <person name="Angiuoli S."/>
            <person name="Bussey H."/>
            <person name="Bowyer P."/>
            <person name="Cotty P.J."/>
            <person name="Dyer P.S."/>
            <person name="Egan A."/>
            <person name="Galens K."/>
            <person name="Fraser-Liggett C.M."/>
            <person name="Haas B.J."/>
            <person name="Inman J.M."/>
            <person name="Kent R."/>
            <person name="Lemieux S."/>
            <person name="Malavazi I."/>
            <person name="Orvis J."/>
            <person name="Roemer T."/>
            <person name="Ronning C.M."/>
            <person name="Sundaram J.P."/>
            <person name="Sutton G."/>
            <person name="Turner G."/>
            <person name="Venter J.C."/>
            <person name="White O.R."/>
            <person name="Whitty B.R."/>
            <person name="Youngman P."/>
            <person name="Wolfe K.H."/>
            <person name="Goldman G.H."/>
            <person name="Wortman J.R."/>
            <person name="Jiang B."/>
            <person name="Denning D.W."/>
            <person name="Nierman W.C."/>
        </authorList>
    </citation>
    <scope>NUCLEOTIDE SEQUENCE [LARGE SCALE GENOMIC DNA]</scope>
    <source>
        <strain>ATCC 1007 / CBS 513.65 / DSM 816 / NCTC 3887 / NRRL 1 / QM 1276 / 107</strain>
    </source>
</reference>